<evidence type="ECO:0000255" key="1">
    <source>
        <dbReference type="HAMAP-Rule" id="MF_00033"/>
    </source>
</evidence>
<reference key="1">
    <citation type="journal article" date="2004" name="Nat. Genet.">
        <title>Comparison of genome degradation in Paratyphi A and Typhi, human-restricted serovars of Salmonella enterica that cause typhoid.</title>
        <authorList>
            <person name="McClelland M."/>
            <person name="Sanderson K.E."/>
            <person name="Clifton S.W."/>
            <person name="Latreille P."/>
            <person name="Porwollik S."/>
            <person name="Sabo A."/>
            <person name="Meyer R."/>
            <person name="Bieri T."/>
            <person name="Ozersky P."/>
            <person name="McLellan M."/>
            <person name="Harkins C.R."/>
            <person name="Wang C."/>
            <person name="Nguyen C."/>
            <person name="Berghoff A."/>
            <person name="Elliott G."/>
            <person name="Kohlberg S."/>
            <person name="Strong C."/>
            <person name="Du F."/>
            <person name="Carter J."/>
            <person name="Kremizki C."/>
            <person name="Layman D."/>
            <person name="Leonard S."/>
            <person name="Sun H."/>
            <person name="Fulton L."/>
            <person name="Nash W."/>
            <person name="Miner T."/>
            <person name="Minx P."/>
            <person name="Delehaunty K."/>
            <person name="Fronick C."/>
            <person name="Magrini V."/>
            <person name="Nhan M."/>
            <person name="Warren W."/>
            <person name="Florea L."/>
            <person name="Spieth J."/>
            <person name="Wilson R.K."/>
        </authorList>
    </citation>
    <scope>NUCLEOTIDE SEQUENCE [LARGE SCALE GENOMIC DNA]</scope>
    <source>
        <strain>ATCC 9150 / SARB42</strain>
    </source>
</reference>
<gene>
    <name evidence="1" type="primary">murG</name>
    <name type="ordered locus">SPA0130</name>
</gene>
<feature type="chain" id="PRO_0000225093" description="UDP-N-acetylglucosamine--N-acetylmuramyl-(pentapeptide) pyrophosphoryl-undecaprenol N-acetylglucosamine transferase">
    <location>
        <begin position="1"/>
        <end position="355"/>
    </location>
</feature>
<feature type="binding site" evidence="1">
    <location>
        <begin position="15"/>
        <end position="17"/>
    </location>
    <ligand>
        <name>UDP-N-acetyl-alpha-D-glucosamine</name>
        <dbReference type="ChEBI" id="CHEBI:57705"/>
    </ligand>
</feature>
<feature type="binding site" evidence="1">
    <location>
        <position position="127"/>
    </location>
    <ligand>
        <name>UDP-N-acetyl-alpha-D-glucosamine</name>
        <dbReference type="ChEBI" id="CHEBI:57705"/>
    </ligand>
</feature>
<feature type="binding site" evidence="1">
    <location>
        <position position="163"/>
    </location>
    <ligand>
        <name>UDP-N-acetyl-alpha-D-glucosamine</name>
        <dbReference type="ChEBI" id="CHEBI:57705"/>
    </ligand>
</feature>
<feature type="binding site" evidence="1">
    <location>
        <position position="191"/>
    </location>
    <ligand>
        <name>UDP-N-acetyl-alpha-D-glucosamine</name>
        <dbReference type="ChEBI" id="CHEBI:57705"/>
    </ligand>
</feature>
<feature type="binding site" evidence="1">
    <location>
        <position position="244"/>
    </location>
    <ligand>
        <name>UDP-N-acetyl-alpha-D-glucosamine</name>
        <dbReference type="ChEBI" id="CHEBI:57705"/>
    </ligand>
</feature>
<feature type="binding site" evidence="1">
    <location>
        <begin position="263"/>
        <end position="268"/>
    </location>
    <ligand>
        <name>UDP-N-acetyl-alpha-D-glucosamine</name>
        <dbReference type="ChEBI" id="CHEBI:57705"/>
    </ligand>
</feature>
<feature type="binding site" evidence="1">
    <location>
        <position position="288"/>
    </location>
    <ligand>
        <name>UDP-N-acetyl-alpha-D-glucosamine</name>
        <dbReference type="ChEBI" id="CHEBI:57705"/>
    </ligand>
</feature>
<accession>Q5PDC8</accession>
<organism>
    <name type="scientific">Salmonella paratyphi A (strain ATCC 9150 / SARB42)</name>
    <dbReference type="NCBI Taxonomy" id="295319"/>
    <lineage>
        <taxon>Bacteria</taxon>
        <taxon>Pseudomonadati</taxon>
        <taxon>Pseudomonadota</taxon>
        <taxon>Gammaproteobacteria</taxon>
        <taxon>Enterobacterales</taxon>
        <taxon>Enterobacteriaceae</taxon>
        <taxon>Salmonella</taxon>
    </lineage>
</organism>
<dbReference type="EC" id="2.4.1.227" evidence="1"/>
<dbReference type="EMBL" id="CP000026">
    <property type="protein sequence ID" value="AAV76163.1"/>
    <property type="molecule type" value="Genomic_DNA"/>
</dbReference>
<dbReference type="RefSeq" id="WP_000016620.1">
    <property type="nucleotide sequence ID" value="NC_006511.1"/>
</dbReference>
<dbReference type="SMR" id="Q5PDC8"/>
<dbReference type="CAZy" id="GT28">
    <property type="family name" value="Glycosyltransferase Family 28"/>
</dbReference>
<dbReference type="KEGG" id="spt:SPA0130"/>
<dbReference type="HOGENOM" id="CLU_037404_2_0_6"/>
<dbReference type="UniPathway" id="UPA00219"/>
<dbReference type="Proteomes" id="UP000008185">
    <property type="component" value="Chromosome"/>
</dbReference>
<dbReference type="GO" id="GO:0005886">
    <property type="term" value="C:plasma membrane"/>
    <property type="evidence" value="ECO:0007669"/>
    <property type="project" value="UniProtKB-SubCell"/>
</dbReference>
<dbReference type="GO" id="GO:0051991">
    <property type="term" value="F:UDP-N-acetyl-D-glucosamine:N-acetylmuramoyl-L-alanyl-D-glutamyl-meso-2,6-diaminopimelyl-D-alanyl-D-alanine-diphosphoundecaprenol 4-beta-N-acetylglucosaminlytransferase activity"/>
    <property type="evidence" value="ECO:0007669"/>
    <property type="project" value="RHEA"/>
</dbReference>
<dbReference type="GO" id="GO:0050511">
    <property type="term" value="F:undecaprenyldiphospho-muramoylpentapeptide beta-N-acetylglucosaminyltransferase activity"/>
    <property type="evidence" value="ECO:0007669"/>
    <property type="project" value="UniProtKB-UniRule"/>
</dbReference>
<dbReference type="GO" id="GO:0005975">
    <property type="term" value="P:carbohydrate metabolic process"/>
    <property type="evidence" value="ECO:0007669"/>
    <property type="project" value="InterPro"/>
</dbReference>
<dbReference type="GO" id="GO:0051301">
    <property type="term" value="P:cell division"/>
    <property type="evidence" value="ECO:0007669"/>
    <property type="project" value="UniProtKB-KW"/>
</dbReference>
<dbReference type="GO" id="GO:0071555">
    <property type="term" value="P:cell wall organization"/>
    <property type="evidence" value="ECO:0007669"/>
    <property type="project" value="UniProtKB-KW"/>
</dbReference>
<dbReference type="GO" id="GO:0030259">
    <property type="term" value="P:lipid glycosylation"/>
    <property type="evidence" value="ECO:0007669"/>
    <property type="project" value="UniProtKB-UniRule"/>
</dbReference>
<dbReference type="GO" id="GO:0009252">
    <property type="term" value="P:peptidoglycan biosynthetic process"/>
    <property type="evidence" value="ECO:0007669"/>
    <property type="project" value="UniProtKB-UniRule"/>
</dbReference>
<dbReference type="GO" id="GO:0008360">
    <property type="term" value="P:regulation of cell shape"/>
    <property type="evidence" value="ECO:0007669"/>
    <property type="project" value="UniProtKB-KW"/>
</dbReference>
<dbReference type="CDD" id="cd03785">
    <property type="entry name" value="GT28_MurG"/>
    <property type="match status" value="1"/>
</dbReference>
<dbReference type="FunFam" id="3.40.50.2000:FF:000016">
    <property type="entry name" value="UDP-N-acetylglucosamine--N-acetylmuramyl-(pentapeptide) pyrophosphoryl-undecaprenol N-acetylglucosamine transferase"/>
    <property type="match status" value="1"/>
</dbReference>
<dbReference type="FunFam" id="3.40.50.2000:FF:000018">
    <property type="entry name" value="UDP-N-acetylglucosamine--N-acetylmuramyl-(pentapeptide) pyrophosphoryl-undecaprenol N-acetylglucosamine transferase"/>
    <property type="match status" value="1"/>
</dbReference>
<dbReference type="Gene3D" id="3.40.50.2000">
    <property type="entry name" value="Glycogen Phosphorylase B"/>
    <property type="match status" value="2"/>
</dbReference>
<dbReference type="HAMAP" id="MF_00033">
    <property type="entry name" value="MurG"/>
    <property type="match status" value="1"/>
</dbReference>
<dbReference type="InterPro" id="IPR006009">
    <property type="entry name" value="GlcNAc_MurG"/>
</dbReference>
<dbReference type="InterPro" id="IPR007235">
    <property type="entry name" value="Glyco_trans_28_C"/>
</dbReference>
<dbReference type="InterPro" id="IPR004276">
    <property type="entry name" value="GlycoTrans_28_N"/>
</dbReference>
<dbReference type="NCBIfam" id="TIGR01133">
    <property type="entry name" value="murG"/>
    <property type="match status" value="1"/>
</dbReference>
<dbReference type="PANTHER" id="PTHR21015:SF22">
    <property type="entry name" value="GLYCOSYLTRANSFERASE"/>
    <property type="match status" value="1"/>
</dbReference>
<dbReference type="PANTHER" id="PTHR21015">
    <property type="entry name" value="UDP-N-ACETYLGLUCOSAMINE--N-ACETYLMURAMYL-(PENTAPEPTIDE) PYROPHOSPHORYL-UNDECAPRENOL N-ACETYLGLUCOSAMINE TRANSFERASE 1"/>
    <property type="match status" value="1"/>
</dbReference>
<dbReference type="Pfam" id="PF04101">
    <property type="entry name" value="Glyco_tran_28_C"/>
    <property type="match status" value="1"/>
</dbReference>
<dbReference type="Pfam" id="PF03033">
    <property type="entry name" value="Glyco_transf_28"/>
    <property type="match status" value="1"/>
</dbReference>
<dbReference type="SUPFAM" id="SSF53756">
    <property type="entry name" value="UDP-Glycosyltransferase/glycogen phosphorylase"/>
    <property type="match status" value="1"/>
</dbReference>
<name>MURG_SALPA</name>
<comment type="function">
    <text evidence="1">Cell wall formation. Catalyzes the transfer of a GlcNAc subunit on undecaprenyl-pyrophosphoryl-MurNAc-pentapeptide (lipid intermediate I) to form undecaprenyl-pyrophosphoryl-MurNAc-(pentapeptide)GlcNAc (lipid intermediate II).</text>
</comment>
<comment type="catalytic activity">
    <reaction evidence="1">
        <text>di-trans,octa-cis-undecaprenyl diphospho-N-acetyl-alpha-D-muramoyl-L-alanyl-D-glutamyl-meso-2,6-diaminopimeloyl-D-alanyl-D-alanine + UDP-N-acetyl-alpha-D-glucosamine = di-trans,octa-cis-undecaprenyl diphospho-[N-acetyl-alpha-D-glucosaminyl-(1-&gt;4)]-N-acetyl-alpha-D-muramoyl-L-alanyl-D-glutamyl-meso-2,6-diaminopimeloyl-D-alanyl-D-alanine + UDP + H(+)</text>
        <dbReference type="Rhea" id="RHEA:31227"/>
        <dbReference type="ChEBI" id="CHEBI:15378"/>
        <dbReference type="ChEBI" id="CHEBI:57705"/>
        <dbReference type="ChEBI" id="CHEBI:58223"/>
        <dbReference type="ChEBI" id="CHEBI:61387"/>
        <dbReference type="ChEBI" id="CHEBI:61388"/>
        <dbReference type="EC" id="2.4.1.227"/>
    </reaction>
</comment>
<comment type="pathway">
    <text evidence="1">Cell wall biogenesis; peptidoglycan biosynthesis.</text>
</comment>
<comment type="subcellular location">
    <subcellularLocation>
        <location evidence="1">Cell inner membrane</location>
        <topology evidence="1">Peripheral membrane protein</topology>
        <orientation evidence="1">Cytoplasmic side</orientation>
    </subcellularLocation>
</comment>
<comment type="similarity">
    <text evidence="1">Belongs to the glycosyltransferase 28 family. MurG subfamily.</text>
</comment>
<sequence length="355" mass="37921">MSGQPKRLMVMAGGTGGHVFPGLAVAHHLMAQGWQVRWLGTADRMEADLVPKHGIDIDFIRISGLRGKGVKALLAAPLRIFNAWRQARAIMKRFKPDVVLGMGGYVSGPGGLAAWSLGIPVVLHEQNGIAGLTNQWLARIATTVMQAFPGAFPNAEVVGNPVRTDVLALPLPQVRLAGRDGPIRVLVVGGSQGARVLNQTMPQVAARLGDTVTIWHQSGKGAQLTVEQAYAGTGQPQHKVTEFIDDMAAAYAWADVVVCRSGALTVSEIAAAGLPAIFVPFQHKDRQQYWNALPLENAGAAKIFEQPQFTVEAVADTLAGWSREALLTMAERARAVSIPDATERVASEVSRVART</sequence>
<proteinExistence type="inferred from homology"/>
<keyword id="KW-0131">Cell cycle</keyword>
<keyword id="KW-0132">Cell division</keyword>
<keyword id="KW-0997">Cell inner membrane</keyword>
<keyword id="KW-1003">Cell membrane</keyword>
<keyword id="KW-0133">Cell shape</keyword>
<keyword id="KW-0961">Cell wall biogenesis/degradation</keyword>
<keyword id="KW-0328">Glycosyltransferase</keyword>
<keyword id="KW-0472">Membrane</keyword>
<keyword id="KW-0573">Peptidoglycan synthesis</keyword>
<keyword id="KW-0808">Transferase</keyword>
<protein>
    <recommendedName>
        <fullName evidence="1">UDP-N-acetylglucosamine--N-acetylmuramyl-(pentapeptide) pyrophosphoryl-undecaprenol N-acetylglucosamine transferase</fullName>
        <ecNumber evidence="1">2.4.1.227</ecNumber>
    </recommendedName>
    <alternativeName>
        <fullName evidence="1">Undecaprenyl-PP-MurNAc-pentapeptide-UDPGlcNAc GlcNAc transferase</fullName>
    </alternativeName>
</protein>